<keyword id="KW-0007">Acetylation</keyword>
<keyword id="KW-0167">Capsid protein</keyword>
<keyword id="KW-1139">Helical capsid protein</keyword>
<keyword id="KW-0946">Virion</keyword>
<sequence>MSYNITSSNQYQYFAAMWAEPQAMLNQCVSALSQSYQTQAARDTVRQQFSNLLSAIVTPNQRFPESGYRVYINSAVLKPLYEALMKSFDTRNRIIETEEESRPSASEVANATQRVDDATVAIRSQIQLLLNELSNGHGLMNRAEFEVLLPWTTAPAT</sequence>
<comment type="function">
    <text>Capsid protein self-assembles to form rod-shaped virions about 18 nm in diameter with a central canal enclosing the viral genomic RNA.</text>
</comment>
<comment type="subcellular location">
    <subcellularLocation>
        <location evidence="2">Virion</location>
    </subcellularLocation>
</comment>
<comment type="similarity">
    <text evidence="2">Belongs to the virgaviridae capsid protein family.</text>
</comment>
<gene>
    <name type="primary">CP</name>
</gene>
<accession>Q9WDG7</accession>
<feature type="initiator methionine" description="Removed; by host" evidence="1">
    <location>
        <position position="1"/>
    </location>
</feature>
<feature type="chain" id="PRO_0000144942" description="Capsid protein">
    <location>
        <begin position="2"/>
        <end position="157"/>
    </location>
</feature>
<feature type="modified residue" description="N-acetylserine; by host" evidence="1">
    <location>
        <position position="2"/>
    </location>
</feature>
<protein>
    <recommendedName>
        <fullName>Capsid protein</fullName>
    </recommendedName>
    <alternativeName>
        <fullName>Coat protein</fullName>
    </alternativeName>
</protein>
<reference key="1">
    <citation type="submission" date="1998-11" db="EMBL/GenBank/DDBJ databases">
        <title>The coat protein gene of Ribgrass Mosaic Virus isolated from Chinese cabbage in Korea.</title>
        <authorList>
            <person name="Sohn S.-H."/>
            <person name="Choi H.-S."/>
            <person name="Jeon W.-B."/>
            <person name="Ryu T.-H."/>
            <person name="Hwang Y.-S."/>
        </authorList>
    </citation>
    <scope>NUCLEOTIDE SEQUENCE [MRNA]</scope>
</reference>
<proteinExistence type="evidence at transcript level"/>
<dbReference type="EMBL" id="AF103781">
    <property type="protein sequence ID" value="AAD20292.1"/>
    <property type="molecule type" value="mRNA"/>
</dbReference>
<dbReference type="SMR" id="Q9WDG7"/>
<dbReference type="GO" id="GO:0019029">
    <property type="term" value="C:helical viral capsid"/>
    <property type="evidence" value="ECO:0007669"/>
    <property type="project" value="UniProtKB-KW"/>
</dbReference>
<dbReference type="GO" id="GO:0005198">
    <property type="term" value="F:structural molecule activity"/>
    <property type="evidence" value="ECO:0007669"/>
    <property type="project" value="InterPro"/>
</dbReference>
<dbReference type="Gene3D" id="1.20.120.70">
    <property type="entry name" value="Tobacco mosaic virus-like, coat protein"/>
    <property type="match status" value="1"/>
</dbReference>
<dbReference type="InterPro" id="IPR001337">
    <property type="entry name" value="TMV-like_coat"/>
</dbReference>
<dbReference type="InterPro" id="IPR036417">
    <property type="entry name" value="TMV-like_coat_sf"/>
</dbReference>
<dbReference type="Pfam" id="PF00721">
    <property type="entry name" value="TMV_coat"/>
    <property type="match status" value="1"/>
</dbReference>
<dbReference type="SUPFAM" id="SSF47195">
    <property type="entry name" value="TMV-like viral coat proteins"/>
    <property type="match status" value="1"/>
</dbReference>
<organismHost>
    <name type="scientific">Digitalis lanata</name>
    <name type="common">Grecian foxglove</name>
    <dbReference type="NCBI Taxonomy" id="49450"/>
</organismHost>
<organismHost>
    <name type="scientific">Eutrema japonicum</name>
    <name type="common">Wasabi plant</name>
    <name type="synonym">Eutrema wasabi</name>
    <dbReference type="NCBI Taxonomy" id="75806"/>
</organismHost>
<organismHost>
    <name type="scientific">Nicotiana tabacum</name>
    <name type="common">Common tobacco</name>
    <dbReference type="NCBI Taxonomy" id="4097"/>
</organismHost>
<organismHost>
    <name type="scientific">Plantago lanceolata</name>
    <name type="common">English plantain</name>
    <name type="synonym">Ribwort plantain</name>
    <dbReference type="NCBI Taxonomy" id="39414"/>
</organismHost>
<organismHost>
    <name type="scientific">Plantago major</name>
    <name type="common">Common plantain</name>
    <dbReference type="NCBI Taxonomy" id="29818"/>
</organismHost>
<organismHost>
    <name type="scientific">Rorippa amphibia</name>
    <name type="common">Great yellow-cress</name>
    <name type="synonym">Nasturtium amphibium</name>
    <dbReference type="NCBI Taxonomy" id="65951"/>
</organismHost>
<organismHost>
    <name type="scientific">Rorippa sylvestris</name>
    <name type="common">Creeping yellow-cress</name>
    <name type="synonym">Nasturtium sylvestre</name>
    <dbReference type="NCBI Taxonomy" id="65952"/>
</organismHost>
<organismHost>
    <name type="scientific">Silene latifolia subsp. alba</name>
    <name type="common">White campion</name>
    <name type="synonym">Lychnis alba</name>
    <dbReference type="NCBI Taxonomy" id="52853"/>
</organismHost>
<organismHost>
    <name type="scientific">Sisymbrium loeselii</name>
    <dbReference type="NCBI Taxonomy" id="203579"/>
</organismHost>
<organism>
    <name type="scientific">Ribgrass mosaic virus (strain CAB)</name>
    <name type="common">RMV</name>
    <dbReference type="NCBI Taxonomy" id="138308"/>
    <lineage>
        <taxon>Viruses</taxon>
        <taxon>Riboviria</taxon>
        <taxon>Orthornavirae</taxon>
        <taxon>Kitrinoviricota</taxon>
        <taxon>Alsuviricetes</taxon>
        <taxon>Martellivirales</taxon>
        <taxon>Virgaviridae</taxon>
        <taxon>Tobamovirus</taxon>
        <taxon>Ribgrass mosaic virus</taxon>
    </lineage>
</organism>
<name>CAPSD_RMVCA</name>
<evidence type="ECO:0000250" key="1"/>
<evidence type="ECO:0000305" key="2"/>